<evidence type="ECO:0000255" key="1">
    <source>
        <dbReference type="HAMAP-Rule" id="MF_00569"/>
    </source>
</evidence>
<proteinExistence type="inferred from homology"/>
<organism>
    <name type="scientific">Bacillus cytotoxicus (strain DSM 22905 / CIP 110041 / 391-98 / NVH 391-98)</name>
    <dbReference type="NCBI Taxonomy" id="315749"/>
    <lineage>
        <taxon>Bacteria</taxon>
        <taxon>Bacillati</taxon>
        <taxon>Bacillota</taxon>
        <taxon>Bacilli</taxon>
        <taxon>Bacillales</taxon>
        <taxon>Bacillaceae</taxon>
        <taxon>Bacillus</taxon>
        <taxon>Bacillus cereus group</taxon>
    </lineage>
</organism>
<feature type="chain" id="PRO_1000082321" description="Quinolinate synthase">
    <location>
        <begin position="1"/>
        <end position="368"/>
    </location>
</feature>
<feature type="binding site" evidence="1">
    <location>
        <position position="46"/>
    </location>
    <ligand>
        <name>iminosuccinate</name>
        <dbReference type="ChEBI" id="CHEBI:77875"/>
    </ligand>
</feature>
<feature type="binding site" evidence="1">
    <location>
        <position position="63"/>
    </location>
    <ligand>
        <name>iminosuccinate</name>
        <dbReference type="ChEBI" id="CHEBI:77875"/>
    </ligand>
</feature>
<feature type="binding site" evidence="1">
    <location>
        <position position="110"/>
    </location>
    <ligand>
        <name>[4Fe-4S] cluster</name>
        <dbReference type="ChEBI" id="CHEBI:49883"/>
    </ligand>
</feature>
<feature type="binding site" evidence="1">
    <location>
        <begin position="141"/>
        <end position="143"/>
    </location>
    <ligand>
        <name>iminosuccinate</name>
        <dbReference type="ChEBI" id="CHEBI:77875"/>
    </ligand>
</feature>
<feature type="binding site" evidence="1">
    <location>
        <position position="162"/>
    </location>
    <ligand>
        <name>iminosuccinate</name>
        <dbReference type="ChEBI" id="CHEBI:77875"/>
    </ligand>
</feature>
<feature type="binding site" evidence="1">
    <location>
        <position position="230"/>
    </location>
    <ligand>
        <name>[4Fe-4S] cluster</name>
        <dbReference type="ChEBI" id="CHEBI:49883"/>
    </ligand>
</feature>
<feature type="binding site" evidence="1">
    <location>
        <begin position="256"/>
        <end position="258"/>
    </location>
    <ligand>
        <name>iminosuccinate</name>
        <dbReference type="ChEBI" id="CHEBI:77875"/>
    </ligand>
</feature>
<feature type="binding site" evidence="1">
    <location>
        <position position="273"/>
    </location>
    <ligand>
        <name>iminosuccinate</name>
        <dbReference type="ChEBI" id="CHEBI:77875"/>
    </ligand>
</feature>
<feature type="binding site" evidence="1">
    <location>
        <position position="320"/>
    </location>
    <ligand>
        <name>[4Fe-4S] cluster</name>
        <dbReference type="ChEBI" id="CHEBI:49883"/>
    </ligand>
</feature>
<reference key="1">
    <citation type="journal article" date="2008" name="Chem. Biol. Interact.">
        <title>Extending the Bacillus cereus group genomics to putative food-borne pathogens of different toxicity.</title>
        <authorList>
            <person name="Lapidus A."/>
            <person name="Goltsman E."/>
            <person name="Auger S."/>
            <person name="Galleron N."/>
            <person name="Segurens B."/>
            <person name="Dossat C."/>
            <person name="Land M.L."/>
            <person name="Broussolle V."/>
            <person name="Brillard J."/>
            <person name="Guinebretiere M.-H."/>
            <person name="Sanchis V."/>
            <person name="Nguen-the C."/>
            <person name="Lereclus D."/>
            <person name="Richardson P."/>
            <person name="Wincker P."/>
            <person name="Weissenbach J."/>
            <person name="Ehrlich S.D."/>
            <person name="Sorokin A."/>
        </authorList>
    </citation>
    <scope>NUCLEOTIDE SEQUENCE [LARGE SCALE GENOMIC DNA]</scope>
    <source>
        <strain>DSM 22905 / CIP 110041 / 391-98 / NVH 391-98</strain>
    </source>
</reference>
<accession>A7GTA8</accession>
<dbReference type="EC" id="2.5.1.72" evidence="1"/>
<dbReference type="EMBL" id="CP000764">
    <property type="protein sequence ID" value="ABS23366.1"/>
    <property type="molecule type" value="Genomic_DNA"/>
</dbReference>
<dbReference type="RefSeq" id="WP_012095603.1">
    <property type="nucleotide sequence ID" value="NC_009674.1"/>
</dbReference>
<dbReference type="SMR" id="A7GTA8"/>
<dbReference type="STRING" id="315749.Bcer98_3143"/>
<dbReference type="GeneID" id="33898391"/>
<dbReference type="KEGG" id="bcy:Bcer98_3143"/>
<dbReference type="eggNOG" id="COG0379">
    <property type="taxonomic scope" value="Bacteria"/>
</dbReference>
<dbReference type="HOGENOM" id="CLU_047382_2_0_9"/>
<dbReference type="OrthoDB" id="9801204at2"/>
<dbReference type="UniPathway" id="UPA00253">
    <property type="reaction ID" value="UER00327"/>
</dbReference>
<dbReference type="Proteomes" id="UP000002300">
    <property type="component" value="Chromosome"/>
</dbReference>
<dbReference type="GO" id="GO:0005829">
    <property type="term" value="C:cytosol"/>
    <property type="evidence" value="ECO:0007669"/>
    <property type="project" value="TreeGrafter"/>
</dbReference>
<dbReference type="GO" id="GO:0051539">
    <property type="term" value="F:4 iron, 4 sulfur cluster binding"/>
    <property type="evidence" value="ECO:0007669"/>
    <property type="project" value="UniProtKB-KW"/>
</dbReference>
<dbReference type="GO" id="GO:0046872">
    <property type="term" value="F:metal ion binding"/>
    <property type="evidence" value="ECO:0007669"/>
    <property type="project" value="UniProtKB-KW"/>
</dbReference>
<dbReference type="GO" id="GO:0008987">
    <property type="term" value="F:quinolinate synthetase A activity"/>
    <property type="evidence" value="ECO:0007669"/>
    <property type="project" value="UniProtKB-UniRule"/>
</dbReference>
<dbReference type="GO" id="GO:0034628">
    <property type="term" value="P:'de novo' NAD biosynthetic process from L-aspartate"/>
    <property type="evidence" value="ECO:0007669"/>
    <property type="project" value="TreeGrafter"/>
</dbReference>
<dbReference type="FunFam" id="3.40.50.10800:FF:000001">
    <property type="entry name" value="Quinolinate synthase A"/>
    <property type="match status" value="1"/>
</dbReference>
<dbReference type="Gene3D" id="3.40.50.10800">
    <property type="entry name" value="NadA-like"/>
    <property type="match status" value="3"/>
</dbReference>
<dbReference type="HAMAP" id="MF_00569">
    <property type="entry name" value="NadA_type3"/>
    <property type="match status" value="1"/>
</dbReference>
<dbReference type="InterPro" id="IPR003473">
    <property type="entry name" value="NadA"/>
</dbReference>
<dbReference type="InterPro" id="IPR036094">
    <property type="entry name" value="NadA_sf"/>
</dbReference>
<dbReference type="InterPro" id="IPR023515">
    <property type="entry name" value="Quinolinate_synth_A_type3"/>
</dbReference>
<dbReference type="NCBIfam" id="TIGR00550">
    <property type="entry name" value="nadA"/>
    <property type="match status" value="1"/>
</dbReference>
<dbReference type="NCBIfam" id="NF006880">
    <property type="entry name" value="PRK09375.2-1"/>
    <property type="match status" value="1"/>
</dbReference>
<dbReference type="NCBIfam" id="NF006883">
    <property type="entry name" value="PRK09375.2-4"/>
    <property type="match status" value="1"/>
</dbReference>
<dbReference type="PANTHER" id="PTHR30573:SF0">
    <property type="entry name" value="QUINOLINATE SYNTHASE, CHLOROPLASTIC"/>
    <property type="match status" value="1"/>
</dbReference>
<dbReference type="PANTHER" id="PTHR30573">
    <property type="entry name" value="QUINOLINATE SYNTHETASE A"/>
    <property type="match status" value="1"/>
</dbReference>
<dbReference type="Pfam" id="PF02445">
    <property type="entry name" value="NadA"/>
    <property type="match status" value="1"/>
</dbReference>
<dbReference type="SUPFAM" id="SSF142754">
    <property type="entry name" value="NadA-like"/>
    <property type="match status" value="1"/>
</dbReference>
<protein>
    <recommendedName>
        <fullName evidence="1">Quinolinate synthase</fullName>
        <ecNumber evidence="1">2.5.1.72</ecNumber>
    </recommendedName>
</protein>
<name>NADA_BACCN</name>
<gene>
    <name evidence="1" type="primary">nadA</name>
    <name type="ordered locus">Bcer98_3143</name>
</gene>
<keyword id="KW-0004">4Fe-4S</keyword>
<keyword id="KW-0963">Cytoplasm</keyword>
<keyword id="KW-0408">Iron</keyword>
<keyword id="KW-0411">Iron-sulfur</keyword>
<keyword id="KW-0479">Metal-binding</keyword>
<keyword id="KW-0662">Pyridine nucleotide biosynthesis</keyword>
<keyword id="KW-0808">Transferase</keyword>
<sequence length="368" mass="41732">MSILEKVQPIETMLPARYYTMSTEDMEKRVREIKEKMGKMLCIPCHHYQKDEVVQFSDAIGDSLQLAQVAARNKEAKYIVFCGVHFMAETADMLTTDEQVVILPDMRAGCSMADMADIEQTERAWRELTTLFGDTMIPLTYVNSTAAIKAFCGRNGGATVTSSNAKKMVSWAFTQKERLVFLPDQHLGRNTAYDLGIELNQMAVWNPNTDSLEYSGNLEDIKVILWKGHCSVHQNFTVKNIESLRKSHPNMNIIVHPECCYEVVQASDYAGSTKYIIDTIEQAPSSSKWAIGTEMNLVNRLIQKHSDKEIISLNPFMCPCLTMNRIDLPHLLWALESIERGEQVNVIQVDKQVTKDAVLALNRMLERV</sequence>
<comment type="function">
    <text evidence="1">Catalyzes the condensation of iminoaspartate with dihydroxyacetone phosphate to form quinolinate.</text>
</comment>
<comment type="catalytic activity">
    <reaction evidence="1">
        <text>iminosuccinate + dihydroxyacetone phosphate = quinolinate + phosphate + 2 H2O + H(+)</text>
        <dbReference type="Rhea" id="RHEA:25888"/>
        <dbReference type="ChEBI" id="CHEBI:15377"/>
        <dbReference type="ChEBI" id="CHEBI:15378"/>
        <dbReference type="ChEBI" id="CHEBI:29959"/>
        <dbReference type="ChEBI" id="CHEBI:43474"/>
        <dbReference type="ChEBI" id="CHEBI:57642"/>
        <dbReference type="ChEBI" id="CHEBI:77875"/>
        <dbReference type="EC" id="2.5.1.72"/>
    </reaction>
    <physiologicalReaction direction="left-to-right" evidence="1">
        <dbReference type="Rhea" id="RHEA:25889"/>
    </physiologicalReaction>
</comment>
<comment type="cofactor">
    <cofactor evidence="1">
        <name>[4Fe-4S] cluster</name>
        <dbReference type="ChEBI" id="CHEBI:49883"/>
    </cofactor>
    <text evidence="1">Binds 1 [4Fe-4S] cluster per subunit.</text>
</comment>
<comment type="pathway">
    <text evidence="1">Cofactor biosynthesis; NAD(+) biosynthesis; quinolinate from iminoaspartate: step 1/1.</text>
</comment>
<comment type="subcellular location">
    <subcellularLocation>
        <location evidence="1">Cytoplasm</location>
    </subcellularLocation>
</comment>
<comment type="similarity">
    <text evidence="1">Belongs to the quinolinate synthase family. Type 3 subfamily.</text>
</comment>